<feature type="chain" id="PRO_0000189252" description="4-diphosphocytidyl-2-C-methyl-D-erythritol kinase">
    <location>
        <begin position="1"/>
        <end position="289"/>
    </location>
</feature>
<feature type="active site" evidence="1">
    <location>
        <position position="16"/>
    </location>
</feature>
<feature type="active site" evidence="1">
    <location>
        <position position="141"/>
    </location>
</feature>
<feature type="binding site" evidence="1">
    <location>
        <begin position="99"/>
        <end position="109"/>
    </location>
    <ligand>
        <name>ATP</name>
        <dbReference type="ChEBI" id="CHEBI:30616"/>
    </ligand>
</feature>
<evidence type="ECO:0000255" key="1">
    <source>
        <dbReference type="HAMAP-Rule" id="MF_00061"/>
    </source>
</evidence>
<protein>
    <recommendedName>
        <fullName evidence="1">4-diphosphocytidyl-2-C-methyl-D-erythritol kinase</fullName>
        <shortName evidence="1">CMK</shortName>
        <ecNumber evidence="1">2.7.1.148</ecNumber>
    </recommendedName>
    <alternativeName>
        <fullName evidence="1">4-(cytidine-5'-diphospho)-2-C-methyl-D-erythritol kinase</fullName>
    </alternativeName>
</protein>
<organism>
    <name type="scientific">Ralstonia nicotianae (strain ATCC BAA-1114 / GMI1000)</name>
    <name type="common">Ralstonia solanacearum</name>
    <dbReference type="NCBI Taxonomy" id="267608"/>
    <lineage>
        <taxon>Bacteria</taxon>
        <taxon>Pseudomonadati</taxon>
        <taxon>Pseudomonadota</taxon>
        <taxon>Betaproteobacteria</taxon>
        <taxon>Burkholderiales</taxon>
        <taxon>Burkholderiaceae</taxon>
        <taxon>Ralstonia</taxon>
        <taxon>Ralstonia solanacearum species complex</taxon>
    </lineage>
</organism>
<name>ISPE_RALN1</name>
<comment type="function">
    <text evidence="1">Catalyzes the phosphorylation of the position 2 hydroxy group of 4-diphosphocytidyl-2C-methyl-D-erythritol.</text>
</comment>
<comment type="catalytic activity">
    <reaction evidence="1">
        <text>4-CDP-2-C-methyl-D-erythritol + ATP = 4-CDP-2-C-methyl-D-erythritol 2-phosphate + ADP + H(+)</text>
        <dbReference type="Rhea" id="RHEA:18437"/>
        <dbReference type="ChEBI" id="CHEBI:15378"/>
        <dbReference type="ChEBI" id="CHEBI:30616"/>
        <dbReference type="ChEBI" id="CHEBI:57823"/>
        <dbReference type="ChEBI" id="CHEBI:57919"/>
        <dbReference type="ChEBI" id="CHEBI:456216"/>
        <dbReference type="EC" id="2.7.1.148"/>
    </reaction>
</comment>
<comment type="pathway">
    <text evidence="1">Isoprenoid biosynthesis; isopentenyl diphosphate biosynthesis via DXP pathway; isopentenyl diphosphate from 1-deoxy-D-xylulose 5-phosphate: step 3/6.</text>
</comment>
<comment type="similarity">
    <text evidence="1">Belongs to the GHMP kinase family. IspE subfamily.</text>
</comment>
<proteinExistence type="inferred from homology"/>
<gene>
    <name evidence="1" type="primary">ispE</name>
    <name type="synonym">ipk</name>
    <name type="ordered locus">RSc0396</name>
    <name type="ORF">RS03325</name>
</gene>
<keyword id="KW-0067">ATP-binding</keyword>
<keyword id="KW-0414">Isoprene biosynthesis</keyword>
<keyword id="KW-0418">Kinase</keyword>
<keyword id="KW-0547">Nucleotide-binding</keyword>
<keyword id="KW-1185">Reference proteome</keyword>
<keyword id="KW-0808">Transferase</keyword>
<accession>Q8Y2E0</accession>
<reference key="1">
    <citation type="journal article" date="2002" name="Nature">
        <title>Genome sequence of the plant pathogen Ralstonia solanacearum.</title>
        <authorList>
            <person name="Salanoubat M."/>
            <person name="Genin S."/>
            <person name="Artiguenave F."/>
            <person name="Gouzy J."/>
            <person name="Mangenot S."/>
            <person name="Arlat M."/>
            <person name="Billault A."/>
            <person name="Brottier P."/>
            <person name="Camus J.-C."/>
            <person name="Cattolico L."/>
            <person name="Chandler M."/>
            <person name="Choisne N."/>
            <person name="Claudel-Renard C."/>
            <person name="Cunnac S."/>
            <person name="Demange N."/>
            <person name="Gaspin C."/>
            <person name="Lavie M."/>
            <person name="Moisan A."/>
            <person name="Robert C."/>
            <person name="Saurin W."/>
            <person name="Schiex T."/>
            <person name="Siguier P."/>
            <person name="Thebault P."/>
            <person name="Whalen M."/>
            <person name="Wincker P."/>
            <person name="Levy M."/>
            <person name="Weissenbach J."/>
            <person name="Boucher C.A."/>
        </authorList>
    </citation>
    <scope>NUCLEOTIDE SEQUENCE [LARGE SCALE GENOMIC DNA]</scope>
    <source>
        <strain>ATCC BAA-1114 / GMI1000</strain>
    </source>
</reference>
<dbReference type="EC" id="2.7.1.148" evidence="1"/>
<dbReference type="EMBL" id="AL646052">
    <property type="protein sequence ID" value="CAD13924.1"/>
    <property type="molecule type" value="Genomic_DNA"/>
</dbReference>
<dbReference type="RefSeq" id="WP_011000358.1">
    <property type="nucleotide sequence ID" value="NC_003295.1"/>
</dbReference>
<dbReference type="SMR" id="Q8Y2E0"/>
<dbReference type="STRING" id="267608.RSc0396"/>
<dbReference type="EnsemblBacteria" id="CAD13924">
    <property type="protein sequence ID" value="CAD13924"/>
    <property type="gene ID" value="RSc0396"/>
</dbReference>
<dbReference type="KEGG" id="rso:RSc0396"/>
<dbReference type="eggNOG" id="COG1947">
    <property type="taxonomic scope" value="Bacteria"/>
</dbReference>
<dbReference type="HOGENOM" id="CLU_053057_3_0_4"/>
<dbReference type="UniPathway" id="UPA00056">
    <property type="reaction ID" value="UER00094"/>
</dbReference>
<dbReference type="Proteomes" id="UP000001436">
    <property type="component" value="Chromosome"/>
</dbReference>
<dbReference type="GO" id="GO:0050515">
    <property type="term" value="F:4-(cytidine 5'-diphospho)-2-C-methyl-D-erythritol kinase activity"/>
    <property type="evidence" value="ECO:0007669"/>
    <property type="project" value="UniProtKB-UniRule"/>
</dbReference>
<dbReference type="GO" id="GO:0005524">
    <property type="term" value="F:ATP binding"/>
    <property type="evidence" value="ECO:0007669"/>
    <property type="project" value="UniProtKB-UniRule"/>
</dbReference>
<dbReference type="GO" id="GO:0019288">
    <property type="term" value="P:isopentenyl diphosphate biosynthetic process, methylerythritol 4-phosphate pathway"/>
    <property type="evidence" value="ECO:0007669"/>
    <property type="project" value="UniProtKB-UniRule"/>
</dbReference>
<dbReference type="GO" id="GO:0016114">
    <property type="term" value="P:terpenoid biosynthetic process"/>
    <property type="evidence" value="ECO:0007669"/>
    <property type="project" value="InterPro"/>
</dbReference>
<dbReference type="Gene3D" id="3.30.230.10">
    <property type="match status" value="1"/>
</dbReference>
<dbReference type="Gene3D" id="3.30.70.890">
    <property type="entry name" value="GHMP kinase, C-terminal domain"/>
    <property type="match status" value="1"/>
</dbReference>
<dbReference type="HAMAP" id="MF_00061">
    <property type="entry name" value="IspE"/>
    <property type="match status" value="1"/>
</dbReference>
<dbReference type="InterPro" id="IPR013750">
    <property type="entry name" value="GHMP_kinase_C_dom"/>
</dbReference>
<dbReference type="InterPro" id="IPR036554">
    <property type="entry name" value="GHMP_kinase_C_sf"/>
</dbReference>
<dbReference type="InterPro" id="IPR006204">
    <property type="entry name" value="GHMP_kinase_N_dom"/>
</dbReference>
<dbReference type="InterPro" id="IPR004424">
    <property type="entry name" value="IspE"/>
</dbReference>
<dbReference type="InterPro" id="IPR020568">
    <property type="entry name" value="Ribosomal_Su5_D2-typ_SF"/>
</dbReference>
<dbReference type="InterPro" id="IPR014721">
    <property type="entry name" value="Ribsml_uS5_D2-typ_fold_subgr"/>
</dbReference>
<dbReference type="NCBIfam" id="TIGR00154">
    <property type="entry name" value="ispE"/>
    <property type="match status" value="1"/>
</dbReference>
<dbReference type="NCBIfam" id="NF011202">
    <property type="entry name" value="PRK14608.1"/>
    <property type="match status" value="1"/>
</dbReference>
<dbReference type="PANTHER" id="PTHR43527">
    <property type="entry name" value="4-DIPHOSPHOCYTIDYL-2-C-METHYL-D-ERYTHRITOL KINASE, CHLOROPLASTIC"/>
    <property type="match status" value="1"/>
</dbReference>
<dbReference type="PANTHER" id="PTHR43527:SF2">
    <property type="entry name" value="4-DIPHOSPHOCYTIDYL-2-C-METHYL-D-ERYTHRITOL KINASE, CHLOROPLASTIC"/>
    <property type="match status" value="1"/>
</dbReference>
<dbReference type="Pfam" id="PF08544">
    <property type="entry name" value="GHMP_kinases_C"/>
    <property type="match status" value="1"/>
</dbReference>
<dbReference type="Pfam" id="PF00288">
    <property type="entry name" value="GHMP_kinases_N"/>
    <property type="match status" value="1"/>
</dbReference>
<dbReference type="PIRSF" id="PIRSF010376">
    <property type="entry name" value="IspE"/>
    <property type="match status" value="1"/>
</dbReference>
<dbReference type="SUPFAM" id="SSF55060">
    <property type="entry name" value="GHMP Kinase, C-terminal domain"/>
    <property type="match status" value="1"/>
</dbReference>
<dbReference type="SUPFAM" id="SSF54211">
    <property type="entry name" value="Ribosomal protein S5 domain 2-like"/>
    <property type="match status" value="1"/>
</dbReference>
<sequence>MPSAPTELRDCPAPAKLNLFLHVVGRRPDGYHLLQTVFQLIDWCDTLHFGRRADGRLVRTTDIPGVPADEDLVIRAARLLQAETGCAYGADIALEKRLPMGGGIGGGSSDAATALLALNRLWGLDLPRAKLMSLGLRLGADVPFFLFGQNAFAEGIGEALTPIALPPATFVVIHPRVHVPTPEIFSDEGLTRNTPLTIITDFPDQQIVFAYGRNDLQAVAERKYGEIARALAWLRQFSPLARMTGSGACVFAPFDRAEQAQAVADQVPSEWEGRCAAGLTHHPLAMFAV</sequence>